<comment type="function">
    <text>Control of topological states of DNA by transient breakage and subsequent rejoining of DNA strands. Topoisomerase II makes double-strand breaks.</text>
</comment>
<comment type="catalytic activity">
    <reaction evidence="3">
        <text>ATP-dependent breakage, passage and rejoining of double-stranded DNA.</text>
        <dbReference type="EC" id="5.6.2.2"/>
    </reaction>
</comment>
<comment type="cofactor">
    <cofactor evidence="3">
        <name>Mg(2+)</name>
        <dbReference type="ChEBI" id="CHEBI:18420"/>
    </cofactor>
    <cofactor evidence="3">
        <name>Mn(2+)</name>
        <dbReference type="ChEBI" id="CHEBI:29035"/>
    </cofactor>
    <cofactor evidence="3">
        <name>Ca(2+)</name>
        <dbReference type="ChEBI" id="CHEBI:29108"/>
    </cofactor>
    <text evidence="3">Binds two Mg(2+) per subunit. The magnesium ions form salt bridges with both the protein and the DNA. Can also accept other divalent metal cations, such as Mn(2+) or Ca(2+).</text>
</comment>
<comment type="subunit">
    <text evidence="1">Homodimer.</text>
</comment>
<comment type="subcellular location">
    <subcellularLocation>
        <location evidence="1">Nucleus</location>
    </subcellularLocation>
</comment>
<comment type="miscellaneous">
    <text>Eukaryotic topoisomerase I and II can relax both negative and positive supercoils, whereas prokaryotic enzymes relax only negative supercoils.</text>
</comment>
<comment type="similarity">
    <text evidence="6">Belongs to the type II topoisomerase family.</text>
</comment>
<gene>
    <name type="primary">TOP2</name>
</gene>
<organism>
    <name type="scientific">Leishmania chagasi</name>
    <dbReference type="NCBI Taxonomy" id="44271"/>
    <lineage>
        <taxon>Eukaryota</taxon>
        <taxon>Discoba</taxon>
        <taxon>Euglenozoa</taxon>
        <taxon>Kinetoplastea</taxon>
        <taxon>Metakinetoplastina</taxon>
        <taxon>Trypanosomatida</taxon>
        <taxon>Trypanosomatidae</taxon>
        <taxon>Leishmaniinae</taxon>
        <taxon>Leishmania</taxon>
    </lineage>
</organism>
<reference key="1">
    <citation type="submission" date="1999-11" db="EMBL/GenBank/DDBJ databases">
        <title>Isolation of a gene encoding a DNA topoisomerase II of Leishmania (Leishmania) chagasi.</title>
        <authorList>
            <person name="Tepe-Lansdell T."/>
            <person name="Mann B.J."/>
            <person name="Labombard M."/>
            <person name="Macdonald T."/>
            <person name="Slunt K.M."/>
            <person name="Pearson R.D."/>
        </authorList>
    </citation>
    <scope>NUCLEOTIDE SEQUENCE [GENOMIC DNA]</scope>
    <source>
        <strain>MHOM/BR/86/L669</strain>
    </source>
</reference>
<feature type="chain" id="PRO_0000145376" description="DNA topoisomerase 2">
    <location>
        <begin position="1"/>
        <end position="1236"/>
    </location>
</feature>
<feature type="domain" description="Toprim" evidence="3">
    <location>
        <begin position="434"/>
        <end position="548"/>
    </location>
</feature>
<feature type="domain" description="Topo IIA-type catalytic" evidence="4">
    <location>
        <begin position="685"/>
        <end position="1101"/>
    </location>
</feature>
<feature type="region of interest" description="Interaction with DNA" evidence="2">
    <location>
        <begin position="956"/>
        <end position="965"/>
    </location>
</feature>
<feature type="region of interest" description="Disordered" evidence="5">
    <location>
        <begin position="1161"/>
        <end position="1211"/>
    </location>
</feature>
<feature type="active site" description="O-(5'-phospho-DNA)-tyrosine intermediate" evidence="4">
    <location>
        <position position="775"/>
    </location>
</feature>
<feature type="binding site" evidence="2">
    <location>
        <position position="65"/>
    </location>
    <ligand>
        <name>ATP</name>
        <dbReference type="ChEBI" id="CHEBI:30616"/>
    </ligand>
</feature>
<feature type="binding site" evidence="2">
    <location>
        <position position="96"/>
    </location>
    <ligand>
        <name>ATP</name>
        <dbReference type="ChEBI" id="CHEBI:30616"/>
    </ligand>
</feature>
<feature type="binding site" evidence="2">
    <location>
        <begin position="124"/>
        <end position="126"/>
    </location>
    <ligand>
        <name>ATP</name>
        <dbReference type="ChEBI" id="CHEBI:30616"/>
    </ligand>
</feature>
<feature type="binding site" evidence="2">
    <location>
        <begin position="137"/>
        <end position="144"/>
    </location>
    <ligand>
        <name>ATP</name>
        <dbReference type="ChEBI" id="CHEBI:30616"/>
    </ligand>
</feature>
<feature type="binding site" evidence="2">
    <location>
        <begin position="354"/>
        <end position="356"/>
    </location>
    <ligand>
        <name>ATP</name>
        <dbReference type="ChEBI" id="CHEBI:30616"/>
    </ligand>
</feature>
<feature type="binding site" evidence="3">
    <location>
        <position position="440"/>
    </location>
    <ligand>
        <name>Mg(2+)</name>
        <dbReference type="ChEBI" id="CHEBI:18420"/>
        <label>1</label>
        <note>catalytic</note>
    </ligand>
</feature>
<feature type="binding site" evidence="3">
    <location>
        <position position="517"/>
    </location>
    <ligand>
        <name>Mg(2+)</name>
        <dbReference type="ChEBI" id="CHEBI:18420"/>
        <label>1</label>
        <note>catalytic</note>
    </ligand>
</feature>
<feature type="binding site" evidence="3">
    <location>
        <position position="517"/>
    </location>
    <ligand>
        <name>Mg(2+)</name>
        <dbReference type="ChEBI" id="CHEBI:18420"/>
        <label>2</label>
    </ligand>
</feature>
<feature type="binding site" evidence="3">
    <location>
        <position position="519"/>
    </location>
    <ligand>
        <name>Mg(2+)</name>
        <dbReference type="ChEBI" id="CHEBI:18420"/>
        <label>2</label>
    </ligand>
</feature>
<feature type="site" description="Interaction with DNA" evidence="3">
    <location>
        <position position="468"/>
    </location>
</feature>
<feature type="site" description="Interaction with DNA" evidence="3">
    <location>
        <position position="471"/>
    </location>
</feature>
<feature type="site" description="Interaction with DNA" evidence="3">
    <location>
        <position position="640"/>
    </location>
</feature>
<feature type="site" description="Interaction with DNA" evidence="3">
    <location>
        <position position="641"/>
    </location>
</feature>
<feature type="site" description="Interaction with DNA" evidence="3">
    <location>
        <position position="693"/>
    </location>
</feature>
<feature type="site" description="Interaction with DNA" evidence="3">
    <location>
        <position position="733"/>
    </location>
</feature>
<feature type="site" description="Transition state stabilizer" evidence="1">
    <location>
        <position position="774"/>
    </location>
</feature>
<feature type="site" description="Important for DNA bending; intercalates between base pairs of target DNA" evidence="1">
    <location>
        <position position="826"/>
    </location>
</feature>
<sequence>MTYASKYKKLTPIDHVLLRPEMYVGSIETQPTPMYIFDPEKGRMVWETMRVNQGLLKIVDEILLNAADNINNSKGSVRQTYISIHISDTGEITVENDGAGLPIVRSREHKMYIPEMVFGHLLTSSNYNNDSTSTTAGRHGYGAKLTNILSTKFSVVCRTDGRESHMSWTDHMRMATAPRVNRVDPKEKSVTRVKFMPDYAHFGFPNASISLDMKRVLHKRIMDLAAMFSKIEVRLNNVPFGFRTFTDYARLYSLPGLDGSMPPEPFVYTSPNGSVAYVPQLTQSPKRIVGVVNGVVTYNGGTHCNAAMDILDSCLDSLSKNFKKNGKVVDTNRVQRHFTVLVFLIQTQPKFDSQSKARLVSTVTMPRMPKNTLEKYLERMPFLEAHVNSMDDQLANELNKEIGAGRRLSSKTLISAITKLVDATSSQPDGRNIRTLIITEGDSAKALALNSLSSEQKKYCGVFPLRGKLLNVRNKNLKRLKTCKGLQDLFLSLGLELGKEYRSPAELRYQRLLVMTDQDADGSHIKGLVINAFESLWPKLLQNNPGYISLFSTPIVKIKVSGKSKEVIAFHSFRDFHRWQRAHPSARYTAKYYKGLGTSTTAEGKEYFADMEKNIMQLTVDARDHQLLDSVFDAAEVEWRKEWMTKANAFQGEVDIDRSKKTLTIPEFVHKEMVHFALVGNARAIPHCVDGLKPSQRKILWAMLRRHNSEASKVAQLSGYISEASAFHHGEASLQETIVKMAQNFTGGNNINLLVPEGQFGSRQQLGNDHAAPRYIFTKLSRFGRLLFPEEDDPLLDYMDEEGTFVEPHHYVPILPMLLCNGAVGIGFGFATTIPSFHPLDVSAAVRAMINGESAKQVVRNLVPWAVGFQGTVRRGPDNEFIAVGKYTAHPNGRFHISEIPWMTSIEAFRLHISSLASADVVQRIADYSGANHIDIDLIVRDGSLTTWAECETDLALAQRIYINGTVFSPTGTLSPIDSDLSPVLQWHYDRRLDLYKRRRTRKIGLMKMDLARLQSTRKFVEHFRQGQIDFLNATDDTLHKTCVKLGLVRVDESFDYILKKPITFFTRTSTEKLQADIAKTQAQIEELKRTTPVKMWLTELDKFDKTFQEYERVLINSIQKEQRSSSITGGVELPALRQPLLMLGASAKGATAYRVHACQYEKPPPSKRRPGESVGGARPSDSAARTVGKRLVGSRSEFKNKKPMSRKNNVKVSLSTRVAQXPGAQLGRLLPHVLM</sequence>
<name>TOP2_LEICH</name>
<evidence type="ECO:0000250" key="1"/>
<evidence type="ECO:0000250" key="2">
    <source>
        <dbReference type="UniProtKB" id="P11388"/>
    </source>
</evidence>
<evidence type="ECO:0000255" key="3">
    <source>
        <dbReference type="PROSITE-ProRule" id="PRU00995"/>
    </source>
</evidence>
<evidence type="ECO:0000255" key="4">
    <source>
        <dbReference type="PROSITE-ProRule" id="PRU01384"/>
    </source>
</evidence>
<evidence type="ECO:0000256" key="5">
    <source>
        <dbReference type="SAM" id="MobiDB-lite"/>
    </source>
</evidence>
<evidence type="ECO:0000305" key="6"/>
<keyword id="KW-0067">ATP-binding</keyword>
<keyword id="KW-0238">DNA-binding</keyword>
<keyword id="KW-0413">Isomerase</keyword>
<keyword id="KW-0460">Magnesium</keyword>
<keyword id="KW-0479">Metal-binding</keyword>
<keyword id="KW-0547">Nucleotide-binding</keyword>
<keyword id="KW-0539">Nucleus</keyword>
<keyword id="KW-0799">Topoisomerase</keyword>
<protein>
    <recommendedName>
        <fullName>DNA topoisomerase 2</fullName>
        <ecNumber evidence="3">5.6.2.2</ecNumber>
    </recommendedName>
    <alternativeName>
        <fullName>DNA topoisomerase II</fullName>
    </alternativeName>
</protein>
<accession>O61078</accession>
<proteinExistence type="inferred from homology"/>
<dbReference type="EC" id="5.6.2.2" evidence="3"/>
<dbReference type="EMBL" id="AF051307">
    <property type="protein sequence ID" value="AAC05295.2"/>
    <property type="molecule type" value="Genomic_DNA"/>
</dbReference>
<dbReference type="GO" id="GO:0005634">
    <property type="term" value="C:nucleus"/>
    <property type="evidence" value="ECO:0007669"/>
    <property type="project" value="UniProtKB-SubCell"/>
</dbReference>
<dbReference type="GO" id="GO:0005524">
    <property type="term" value="F:ATP binding"/>
    <property type="evidence" value="ECO:0007669"/>
    <property type="project" value="UniProtKB-KW"/>
</dbReference>
<dbReference type="GO" id="GO:0003677">
    <property type="term" value="F:DNA binding"/>
    <property type="evidence" value="ECO:0007669"/>
    <property type="project" value="UniProtKB-KW"/>
</dbReference>
<dbReference type="GO" id="GO:0003918">
    <property type="term" value="F:DNA topoisomerase type II (double strand cut, ATP-hydrolyzing) activity"/>
    <property type="evidence" value="ECO:0007669"/>
    <property type="project" value="UniProtKB-EC"/>
</dbReference>
<dbReference type="GO" id="GO:0046872">
    <property type="term" value="F:metal ion binding"/>
    <property type="evidence" value="ECO:0007669"/>
    <property type="project" value="UniProtKB-KW"/>
</dbReference>
<dbReference type="GO" id="GO:0006265">
    <property type="term" value="P:DNA topological change"/>
    <property type="evidence" value="ECO:0007669"/>
    <property type="project" value="InterPro"/>
</dbReference>
<dbReference type="GO" id="GO:0000712">
    <property type="term" value="P:resolution of meiotic recombination intermediates"/>
    <property type="evidence" value="ECO:0007669"/>
    <property type="project" value="TreeGrafter"/>
</dbReference>
<dbReference type="GO" id="GO:0000819">
    <property type="term" value="P:sister chromatid segregation"/>
    <property type="evidence" value="ECO:0007669"/>
    <property type="project" value="TreeGrafter"/>
</dbReference>
<dbReference type="CDD" id="cd00187">
    <property type="entry name" value="TOP4c"/>
    <property type="match status" value="1"/>
</dbReference>
<dbReference type="FunFam" id="1.10.268.10:FF:000010">
    <property type="entry name" value="DNA topoisomerase 2"/>
    <property type="match status" value="1"/>
</dbReference>
<dbReference type="FunFam" id="3.30.1360.40:FF:000022">
    <property type="entry name" value="DNA topoisomerase 2"/>
    <property type="match status" value="1"/>
</dbReference>
<dbReference type="FunFam" id="3.30.230.10:FF:000110">
    <property type="entry name" value="DNA topoisomerase 2"/>
    <property type="match status" value="1"/>
</dbReference>
<dbReference type="FunFam" id="3.30.565.10:FF:000092">
    <property type="entry name" value="DNA topoisomerase 2"/>
    <property type="match status" value="1"/>
</dbReference>
<dbReference type="FunFam" id="3.40.50.670:FF:000001">
    <property type="entry name" value="DNA topoisomerase 2"/>
    <property type="match status" value="1"/>
</dbReference>
<dbReference type="FunFam" id="3.90.199.10:FF:000002">
    <property type="entry name" value="DNA topoisomerase 2"/>
    <property type="match status" value="1"/>
</dbReference>
<dbReference type="Gene3D" id="3.30.1360.40">
    <property type="match status" value="1"/>
</dbReference>
<dbReference type="Gene3D" id="3.30.1490.30">
    <property type="match status" value="1"/>
</dbReference>
<dbReference type="Gene3D" id="3.30.230.10">
    <property type="match status" value="1"/>
</dbReference>
<dbReference type="Gene3D" id="3.40.50.670">
    <property type="match status" value="1"/>
</dbReference>
<dbReference type="Gene3D" id="3.30.565.10">
    <property type="entry name" value="Histidine kinase-like ATPase, C-terminal domain"/>
    <property type="match status" value="1"/>
</dbReference>
<dbReference type="Gene3D" id="3.90.199.10">
    <property type="entry name" value="Topoisomerase II, domain 5"/>
    <property type="match status" value="1"/>
</dbReference>
<dbReference type="Gene3D" id="1.10.268.10">
    <property type="entry name" value="Topoisomerase, domain 3"/>
    <property type="match status" value="1"/>
</dbReference>
<dbReference type="InterPro" id="IPR050634">
    <property type="entry name" value="DNA_Topoisomerase_II"/>
</dbReference>
<dbReference type="InterPro" id="IPR036890">
    <property type="entry name" value="HATPase_C_sf"/>
</dbReference>
<dbReference type="InterPro" id="IPR020568">
    <property type="entry name" value="Ribosomal_Su5_D2-typ_SF"/>
</dbReference>
<dbReference type="InterPro" id="IPR014721">
    <property type="entry name" value="Ribsml_uS5_D2-typ_fold_subgr"/>
</dbReference>
<dbReference type="InterPro" id="IPR001241">
    <property type="entry name" value="Topo_IIA"/>
</dbReference>
<dbReference type="InterPro" id="IPR013760">
    <property type="entry name" value="Topo_IIA-like_dom_sf"/>
</dbReference>
<dbReference type="InterPro" id="IPR013758">
    <property type="entry name" value="Topo_IIA_A/C_ab"/>
</dbReference>
<dbReference type="InterPro" id="IPR013757">
    <property type="entry name" value="Topo_IIA_A_a_sf"/>
</dbReference>
<dbReference type="InterPro" id="IPR013759">
    <property type="entry name" value="Topo_IIA_B_C"/>
</dbReference>
<dbReference type="InterPro" id="IPR013506">
    <property type="entry name" value="Topo_IIA_bsu_dom2"/>
</dbReference>
<dbReference type="InterPro" id="IPR002205">
    <property type="entry name" value="Topo_IIA_dom_A"/>
</dbReference>
<dbReference type="InterPro" id="IPR001154">
    <property type="entry name" value="TopoII_euk"/>
</dbReference>
<dbReference type="InterPro" id="IPR018522">
    <property type="entry name" value="TopoIIA_CS"/>
</dbReference>
<dbReference type="InterPro" id="IPR031660">
    <property type="entry name" value="TOPRIM_C"/>
</dbReference>
<dbReference type="InterPro" id="IPR006171">
    <property type="entry name" value="TOPRIM_dom"/>
</dbReference>
<dbReference type="PANTHER" id="PTHR10169:SF50">
    <property type="entry name" value="DNA TOPOISOMERASE 2"/>
    <property type="match status" value="1"/>
</dbReference>
<dbReference type="PANTHER" id="PTHR10169">
    <property type="entry name" value="DNA TOPOISOMERASE/GYRASE"/>
    <property type="match status" value="1"/>
</dbReference>
<dbReference type="Pfam" id="PF00204">
    <property type="entry name" value="DNA_gyraseB"/>
    <property type="match status" value="1"/>
</dbReference>
<dbReference type="Pfam" id="PF00521">
    <property type="entry name" value="DNA_topoisoIV"/>
    <property type="match status" value="1"/>
</dbReference>
<dbReference type="Pfam" id="PF02518">
    <property type="entry name" value="HATPase_c"/>
    <property type="match status" value="1"/>
</dbReference>
<dbReference type="Pfam" id="PF01751">
    <property type="entry name" value="Toprim"/>
    <property type="match status" value="1"/>
</dbReference>
<dbReference type="Pfam" id="PF16898">
    <property type="entry name" value="TOPRIM_C"/>
    <property type="match status" value="1"/>
</dbReference>
<dbReference type="PRINTS" id="PR01158">
    <property type="entry name" value="TOPISMRASEII"/>
</dbReference>
<dbReference type="PRINTS" id="PR00418">
    <property type="entry name" value="TPI2FAMILY"/>
</dbReference>
<dbReference type="SMART" id="SM00433">
    <property type="entry name" value="TOP2c"/>
    <property type="match status" value="1"/>
</dbReference>
<dbReference type="SMART" id="SM00434">
    <property type="entry name" value="TOP4c"/>
    <property type="match status" value="1"/>
</dbReference>
<dbReference type="SUPFAM" id="SSF55874">
    <property type="entry name" value="ATPase domain of HSP90 chaperone/DNA topoisomerase II/histidine kinase"/>
    <property type="match status" value="1"/>
</dbReference>
<dbReference type="SUPFAM" id="SSF54211">
    <property type="entry name" value="Ribosomal protein S5 domain 2-like"/>
    <property type="match status" value="1"/>
</dbReference>
<dbReference type="SUPFAM" id="SSF56719">
    <property type="entry name" value="Type II DNA topoisomerase"/>
    <property type="match status" value="1"/>
</dbReference>
<dbReference type="PROSITE" id="PS52040">
    <property type="entry name" value="TOPO_IIA"/>
    <property type="match status" value="1"/>
</dbReference>
<dbReference type="PROSITE" id="PS00177">
    <property type="entry name" value="TOPOISOMERASE_II"/>
    <property type="match status" value="1"/>
</dbReference>
<dbReference type="PROSITE" id="PS50880">
    <property type="entry name" value="TOPRIM"/>
    <property type="match status" value="1"/>
</dbReference>